<gene>
    <name evidence="2" type="primary">betI</name>
    <name type="ordered locus">Bcenmc03_5184</name>
</gene>
<evidence type="ECO:0000250" key="1"/>
<evidence type="ECO:0000255" key="2">
    <source>
        <dbReference type="HAMAP-Rule" id="MF_00768"/>
    </source>
</evidence>
<protein>
    <recommendedName>
        <fullName evidence="2">HTH-type transcriptional regulator BetI</fullName>
    </recommendedName>
</protein>
<keyword id="KW-0238">DNA-binding</keyword>
<keyword id="KW-0678">Repressor</keyword>
<keyword id="KW-0804">Transcription</keyword>
<keyword id="KW-0805">Transcription regulation</keyword>
<feature type="chain" id="PRO_1000133653" description="HTH-type transcriptional regulator BetI">
    <location>
        <begin position="1"/>
        <end position="194"/>
    </location>
</feature>
<feature type="domain" description="HTH tetR-type" evidence="2">
    <location>
        <begin position="8"/>
        <end position="68"/>
    </location>
</feature>
<feature type="DNA-binding region" description="H-T-H motif" evidence="2">
    <location>
        <begin position="31"/>
        <end position="50"/>
    </location>
</feature>
<proteinExistence type="inferred from homology"/>
<sequence length="194" mass="21330">MPKVGMREIRRAQLIDATLRSIDEAGLPGTTLASVAQRANISTGIVSHYFGDKDGLLEATMRHVLRDLWSATTRRRVAARKDPRSRLRAVVAANFDDTQVSAPVMKTWLAFWSQSMHDPMLKRLQHVNTRRLHSNLCAEFAKALPLAKAREAASGLAALIDGLWLRGALAGGPIDTRAALKLAHDYIDLLLASD</sequence>
<dbReference type="EMBL" id="CP000959">
    <property type="protein sequence ID" value="ACA94313.1"/>
    <property type="molecule type" value="Genomic_DNA"/>
</dbReference>
<dbReference type="RefSeq" id="WP_006480642.1">
    <property type="nucleotide sequence ID" value="NC_010515.1"/>
</dbReference>
<dbReference type="SMR" id="B1K709"/>
<dbReference type="GeneID" id="83051872"/>
<dbReference type="KEGG" id="bcm:Bcenmc03_5184"/>
<dbReference type="HOGENOM" id="CLU_069356_15_4_4"/>
<dbReference type="UniPathway" id="UPA00529"/>
<dbReference type="Proteomes" id="UP000002169">
    <property type="component" value="Chromosome 2"/>
</dbReference>
<dbReference type="GO" id="GO:0003700">
    <property type="term" value="F:DNA-binding transcription factor activity"/>
    <property type="evidence" value="ECO:0007669"/>
    <property type="project" value="UniProtKB-UniRule"/>
</dbReference>
<dbReference type="GO" id="GO:0000976">
    <property type="term" value="F:transcription cis-regulatory region binding"/>
    <property type="evidence" value="ECO:0007669"/>
    <property type="project" value="TreeGrafter"/>
</dbReference>
<dbReference type="GO" id="GO:0019285">
    <property type="term" value="P:glycine betaine biosynthetic process from choline"/>
    <property type="evidence" value="ECO:0007669"/>
    <property type="project" value="UniProtKB-UniRule"/>
</dbReference>
<dbReference type="GO" id="GO:0045892">
    <property type="term" value="P:negative regulation of DNA-templated transcription"/>
    <property type="evidence" value="ECO:0007669"/>
    <property type="project" value="UniProtKB-UniRule"/>
</dbReference>
<dbReference type="Gene3D" id="1.10.357.10">
    <property type="entry name" value="Tetracycline Repressor, domain 2"/>
    <property type="match status" value="1"/>
</dbReference>
<dbReference type="HAMAP" id="MF_00768">
    <property type="entry name" value="HTH_type_BetI"/>
    <property type="match status" value="1"/>
</dbReference>
<dbReference type="InterPro" id="IPR039538">
    <property type="entry name" value="BetI_C"/>
</dbReference>
<dbReference type="InterPro" id="IPR023772">
    <property type="entry name" value="DNA-bd_HTH_TetR-type_CS"/>
</dbReference>
<dbReference type="InterPro" id="IPR009057">
    <property type="entry name" value="Homeodomain-like_sf"/>
</dbReference>
<dbReference type="InterPro" id="IPR050109">
    <property type="entry name" value="HTH-type_TetR-like_transc_reg"/>
</dbReference>
<dbReference type="InterPro" id="IPR001647">
    <property type="entry name" value="HTH_TetR"/>
</dbReference>
<dbReference type="InterPro" id="IPR036271">
    <property type="entry name" value="Tet_transcr_reg_TetR-rel_C_sf"/>
</dbReference>
<dbReference type="InterPro" id="IPR017757">
    <property type="entry name" value="Tscrpt_rep_BetI"/>
</dbReference>
<dbReference type="NCBIfam" id="TIGR03384">
    <property type="entry name" value="betaine_BetI"/>
    <property type="match status" value="1"/>
</dbReference>
<dbReference type="NCBIfam" id="NF001978">
    <property type="entry name" value="PRK00767.1"/>
    <property type="match status" value="1"/>
</dbReference>
<dbReference type="PANTHER" id="PTHR30055:SF234">
    <property type="entry name" value="HTH-TYPE TRANSCRIPTIONAL REGULATOR BETI"/>
    <property type="match status" value="1"/>
</dbReference>
<dbReference type="PANTHER" id="PTHR30055">
    <property type="entry name" value="HTH-TYPE TRANSCRIPTIONAL REGULATOR RUTR"/>
    <property type="match status" value="1"/>
</dbReference>
<dbReference type="Pfam" id="PF13977">
    <property type="entry name" value="TetR_C_6"/>
    <property type="match status" value="1"/>
</dbReference>
<dbReference type="Pfam" id="PF00440">
    <property type="entry name" value="TetR_N"/>
    <property type="match status" value="1"/>
</dbReference>
<dbReference type="SUPFAM" id="SSF46689">
    <property type="entry name" value="Homeodomain-like"/>
    <property type="match status" value="1"/>
</dbReference>
<dbReference type="SUPFAM" id="SSF48498">
    <property type="entry name" value="Tetracyclin repressor-like, C-terminal domain"/>
    <property type="match status" value="1"/>
</dbReference>
<dbReference type="PROSITE" id="PS01081">
    <property type="entry name" value="HTH_TETR_1"/>
    <property type="match status" value="1"/>
</dbReference>
<dbReference type="PROSITE" id="PS50977">
    <property type="entry name" value="HTH_TETR_2"/>
    <property type="match status" value="1"/>
</dbReference>
<accession>B1K709</accession>
<name>BETI_BURO0</name>
<organism>
    <name type="scientific">Burkholderia orbicola (strain MC0-3)</name>
    <dbReference type="NCBI Taxonomy" id="406425"/>
    <lineage>
        <taxon>Bacteria</taxon>
        <taxon>Pseudomonadati</taxon>
        <taxon>Pseudomonadota</taxon>
        <taxon>Betaproteobacteria</taxon>
        <taxon>Burkholderiales</taxon>
        <taxon>Burkholderiaceae</taxon>
        <taxon>Burkholderia</taxon>
        <taxon>Burkholderia cepacia complex</taxon>
        <taxon>Burkholderia orbicola</taxon>
    </lineage>
</organism>
<comment type="function">
    <text evidence="1">Repressor involved in the biosynthesis of the osmoprotectant glycine betaine. It represses transcription of the choline transporter BetT and the genes of BetAB involved in the synthesis of glycine betaine (By similarity).</text>
</comment>
<comment type="pathway">
    <text>Amine and polyamine biosynthesis; betaine biosynthesis via choline pathway [regulation].</text>
</comment>
<reference key="1">
    <citation type="submission" date="2008-02" db="EMBL/GenBank/DDBJ databases">
        <title>Complete sequence of chromosome 2 of Burkholderia cenocepacia MC0-3.</title>
        <authorList>
            <person name="Copeland A."/>
            <person name="Lucas S."/>
            <person name="Lapidus A."/>
            <person name="Barry K."/>
            <person name="Bruce D."/>
            <person name="Goodwin L."/>
            <person name="Glavina del Rio T."/>
            <person name="Dalin E."/>
            <person name="Tice H."/>
            <person name="Pitluck S."/>
            <person name="Chain P."/>
            <person name="Malfatti S."/>
            <person name="Shin M."/>
            <person name="Vergez L."/>
            <person name="Schmutz J."/>
            <person name="Larimer F."/>
            <person name="Land M."/>
            <person name="Hauser L."/>
            <person name="Kyrpides N."/>
            <person name="Mikhailova N."/>
            <person name="Tiedje J."/>
            <person name="Richardson P."/>
        </authorList>
    </citation>
    <scope>NUCLEOTIDE SEQUENCE [LARGE SCALE GENOMIC DNA]</scope>
    <source>
        <strain>MC0-3</strain>
    </source>
</reference>